<keyword id="KW-0002">3D-structure</keyword>
<keyword id="KW-0930">Antiviral protein</keyword>
<keyword id="KW-1203">Blood coagulation cascade inhibiting toxin</keyword>
<keyword id="KW-1015">Disulfide bond</keyword>
<keyword id="KW-0325">Glycoprotein</keyword>
<keyword id="KW-1199">Hemostasis impairing toxin</keyword>
<keyword id="KW-0646">Protease inhibitor</keyword>
<keyword id="KW-1185">Reference proteome</keyword>
<keyword id="KW-0964">Secreted</keyword>
<keyword id="KW-0722">Serine protease inhibitor</keyword>
<keyword id="KW-0732">Signal</keyword>
<keyword id="KW-0800">Toxin</keyword>
<reference evidence="16" key="1">
    <citation type="journal article" date="2007" name="Science">
        <title>Genome sequence of Aedes aegypti, a major arbovirus vector.</title>
        <authorList>
            <person name="Nene V."/>
            <person name="Wortman J.R."/>
            <person name="Lawson D."/>
            <person name="Haas B.J."/>
            <person name="Kodira C.D."/>
            <person name="Tu Z.J."/>
            <person name="Loftus B.J."/>
            <person name="Xi Z."/>
            <person name="Megy K."/>
            <person name="Grabherr M."/>
            <person name="Ren Q."/>
            <person name="Zdobnov E.M."/>
            <person name="Lobo N.F."/>
            <person name="Campbell K.S."/>
            <person name="Brown S.E."/>
            <person name="Bonaldo M.F."/>
            <person name="Zhu J."/>
            <person name="Sinkins S.P."/>
            <person name="Hogenkamp D.G."/>
            <person name="Amedeo P."/>
            <person name="Arensburger P."/>
            <person name="Atkinson P.W."/>
            <person name="Bidwell S.L."/>
            <person name="Biedler J."/>
            <person name="Birney E."/>
            <person name="Bruggner R.V."/>
            <person name="Costas J."/>
            <person name="Coy M.R."/>
            <person name="Crabtree J."/>
            <person name="Crawford M."/>
            <person name="DeBruyn B."/>
            <person name="DeCaprio D."/>
            <person name="Eiglmeier K."/>
            <person name="Eisenstadt E."/>
            <person name="El-Dorry H."/>
            <person name="Gelbart W.M."/>
            <person name="Gomes S.L."/>
            <person name="Hammond M."/>
            <person name="Hannick L.I."/>
            <person name="Hogan J.R."/>
            <person name="Holmes M.H."/>
            <person name="Jaffe D."/>
            <person name="Johnston S.J."/>
            <person name="Kennedy R.C."/>
            <person name="Koo H."/>
            <person name="Kravitz S."/>
            <person name="Kriventseva E.V."/>
            <person name="Kulp D."/>
            <person name="Labutti K."/>
            <person name="Lee E."/>
            <person name="Li S."/>
            <person name="Lovin D.D."/>
            <person name="Mao C."/>
            <person name="Mauceli E."/>
            <person name="Menck C.F."/>
            <person name="Miller J.R."/>
            <person name="Montgomery P."/>
            <person name="Mori A."/>
            <person name="Nascimento A.L."/>
            <person name="Naveira H.F."/>
            <person name="Nusbaum C."/>
            <person name="O'Leary S.B."/>
            <person name="Orvis J."/>
            <person name="Pertea M."/>
            <person name="Quesneville H."/>
            <person name="Reidenbach K.R."/>
            <person name="Rogers Y.-H.C."/>
            <person name="Roth C.W."/>
            <person name="Schneider J.R."/>
            <person name="Schatz M."/>
            <person name="Shumway M."/>
            <person name="Stanke M."/>
            <person name="Stinson E.O."/>
            <person name="Tubio J.M.C."/>
            <person name="Vanzee J.P."/>
            <person name="Verjovski-Almeida S."/>
            <person name="Werner D."/>
            <person name="White O.R."/>
            <person name="Wyder S."/>
            <person name="Zeng Q."/>
            <person name="Zhao Q."/>
            <person name="Zhao Y."/>
            <person name="Hill C.A."/>
            <person name="Raikhel A.S."/>
            <person name="Soares M.B."/>
            <person name="Knudson D.L."/>
            <person name="Lee N.H."/>
            <person name="Galagan J."/>
            <person name="Salzberg S.L."/>
            <person name="Paulsen I.T."/>
            <person name="Dimopoulos G."/>
            <person name="Collins F.H."/>
            <person name="Bruce B."/>
            <person name="Fraser-Liggett C.M."/>
            <person name="Severson D.W."/>
        </authorList>
    </citation>
    <scope>NUCLEOTIDE SEQUENCE [LARGE SCALE GENOMIC DNA]</scope>
    <source>
        <strain evidence="16">Liverpool</strain>
    </source>
</reference>
<reference evidence="15" key="2">
    <citation type="journal article" date="2007" name="BMC Genomics">
        <title>An annotated catalogue of salivary gland transcripts in the adult female mosquito, Aedes aegypti.</title>
        <authorList>
            <person name="Ribeiro J.M.C."/>
            <person name="Arca B."/>
            <person name="Lombardo F."/>
            <person name="Calvo E."/>
            <person name="Phan V.M."/>
            <person name="Chandra P.K."/>
            <person name="Wikel S.K."/>
        </authorList>
    </citation>
    <scope>NUCLEOTIDE SEQUENCE [LARGE SCALE MRNA]</scope>
    <scope>TISSUE SPECIFICITY</scope>
</reference>
<reference evidence="14" key="3">
    <citation type="journal article" date="2010" name="Biochimie">
        <title>A novel trypsin Kazal-type inhibitor from Aedes aegypti with thrombin coagulant inhibitory activity.</title>
        <authorList>
            <person name="Watanabe R.M."/>
            <person name="Soares T.S."/>
            <person name="Morais-Zani K."/>
            <person name="Tanaka-Azevedo A.M."/>
            <person name="Maciel C."/>
            <person name="Capurro M.L."/>
            <person name="Torquato R.J."/>
            <person name="Tanaka A.S."/>
        </authorList>
    </citation>
    <scope>FUNCTION</scope>
    <scope>TISSUE SPECIFICITY</scope>
    <scope>DEVELOPMENTAL STAGE</scope>
</reference>
<reference evidence="14" key="4">
    <citation type="journal article" date="2011" name="Biochimie">
        <title>Characterization of thrombin inhibitory mechanism of rAaTI, a Kazal-type inhibitor from Aedes aegypti with anticoagulant activity.</title>
        <authorList>
            <person name="Watanabe R.M."/>
            <person name="Tanaka-Azevedo A.M."/>
            <person name="Araujo M.S."/>
            <person name="Juliano M.A."/>
            <person name="Tanaka A.S."/>
        </authorList>
    </citation>
    <scope>FUNCTION</scope>
</reference>
<reference evidence="14" key="5">
    <citation type="journal article" date="2019" name="IScience">
        <title>Increased Mosquito Midgut Infection by Dengue Virus Recruitment of Plasmin Is Blocked by an Endogenous Kazal-type Inhibitor.</title>
        <authorList>
            <person name="Ramesh K."/>
            <person name="Walvekar V.A."/>
            <person name="Wong B."/>
            <person name="Sayed A.M.M."/>
            <person name="Misse D."/>
            <person name="Kini R.M."/>
            <person name="Mok Y.K."/>
            <person name="Pompon J."/>
        </authorList>
    </citation>
    <scope>FUNCTION</scope>
    <scope>FUNCTION (MICROBIAL INFECTION)</scope>
    <scope>INTERACTION WITH HUMAN PLASMIN</scope>
    <scope>TISSUE SPECIFICITY</scope>
    <scope>INDUCTION</scope>
    <scope>INDUCTION (MICROBIAL INFECTION)</scope>
    <scope>DISRUPTION PHENOTYPE (MICROBIAL INFECTION)</scope>
    <scope>MUTAGENESIS OF ARG-35</scope>
</reference>
<reference evidence="18" key="6">
    <citation type="journal article" date="2017" name="Acta Crystallogr. F Struct. Biol. Commun.">
        <title>High-resolution structure of a Kazal-type serine protease inhibitor from the dengue vector Aedes aegypti.</title>
        <authorList>
            <person name="Torquato R.J.S."/>
            <person name="Lu S."/>
            <person name="Martins N.H."/>
            <person name="Tanaka A.S."/>
            <person name="Pereira P.J.B."/>
        </authorList>
    </citation>
    <scope>X-RAY CRYSTALLOGRAPHY (1.40 ANGSTROMS) OF 27-91</scope>
    <scope>DISULFIDE BONDS</scope>
</reference>
<reference evidence="19" key="7">
    <citation type="journal article" date="2022" name="Protein Sci.">
        <title>Crystal structure of Aedes aegypti trypsin inhibitor in complex with mu-plasmin reveals role for scaffold stability in Kazal-type serine protease inhibitor.</title>
        <authorList>
            <person name="Walvekar V.A."/>
            <person name="Ramesh K."/>
            <person name="Jobichen C."/>
            <person name="Kannan M."/>
            <person name="Sivaraman J."/>
            <person name="Kini R.M."/>
            <person name="Mok Y.K."/>
        </authorList>
    </citation>
    <scope>X-RAY CRYSTALLOGRAPHY (1.95 ANGSTROMS) OF 23-91 IN COMPLEX WITH HUMAN PLASMIN</scope>
    <scope>FUNCTION</scope>
    <scope>INTERACTION WITH HUMAN PLG</scope>
    <scope>DISULFIDE BONDS</scope>
    <scope>MUTAGENESIS OF PRO-34</scope>
</reference>
<gene>
    <name evidence="16" type="ORF">AAEL006007</name>
</gene>
<dbReference type="EMBL" id="CH477370">
    <property type="protein sequence ID" value="EAT42466.1"/>
    <property type="molecule type" value="Genomic_DNA"/>
</dbReference>
<dbReference type="EMBL" id="DQ440176">
    <property type="protein sequence ID" value="ABF18209.1"/>
    <property type="molecule type" value="mRNA"/>
</dbReference>
<dbReference type="RefSeq" id="XP_001651770.1">
    <property type="nucleotide sequence ID" value="XM_001651720.1"/>
</dbReference>
<dbReference type="PDB" id="5DAE">
    <property type="method" value="X-ray"/>
    <property type="resolution" value="1.40 A"/>
    <property type="chains" value="A/B=27-91"/>
</dbReference>
<dbReference type="PDB" id="7E50">
    <property type="method" value="X-ray"/>
    <property type="resolution" value="1.95 A"/>
    <property type="chains" value="A=23-91"/>
</dbReference>
<dbReference type="PDBsum" id="5DAE"/>
<dbReference type="PDBsum" id="7E50"/>
<dbReference type="SMR" id="Q177W0"/>
<dbReference type="MEROPS" id="I01.056"/>
<dbReference type="PaxDb" id="7159-AAEL006007-PA"/>
<dbReference type="VEuPathDB" id="VectorBase:AAEL006011"/>
<dbReference type="eggNOG" id="ENOG502R004">
    <property type="taxonomic scope" value="Eukaryota"/>
</dbReference>
<dbReference type="HOGENOM" id="CLU_169765_5_0_1"/>
<dbReference type="InParanoid" id="Q1HRB8"/>
<dbReference type="OMA" id="ACPRIYM"/>
<dbReference type="Proteomes" id="UP000008820">
    <property type="component" value="Unplaced"/>
</dbReference>
<dbReference type="Proteomes" id="UP000682892">
    <property type="component" value="Chromosome 2"/>
</dbReference>
<dbReference type="GO" id="GO:0005615">
    <property type="term" value="C:extracellular space"/>
    <property type="evidence" value="ECO:0007669"/>
    <property type="project" value="TreeGrafter"/>
</dbReference>
<dbReference type="GO" id="GO:0004867">
    <property type="term" value="F:serine-type endopeptidase inhibitor activity"/>
    <property type="evidence" value="ECO:0007669"/>
    <property type="project" value="UniProtKB-KW"/>
</dbReference>
<dbReference type="GO" id="GO:0090729">
    <property type="term" value="F:toxin activity"/>
    <property type="evidence" value="ECO:0007669"/>
    <property type="project" value="UniProtKB-KW"/>
</dbReference>
<dbReference type="GO" id="GO:0050688">
    <property type="term" value="P:regulation of defense response to virus"/>
    <property type="evidence" value="ECO:0007669"/>
    <property type="project" value="UniProtKB-KW"/>
</dbReference>
<dbReference type="CDD" id="cd00104">
    <property type="entry name" value="KAZAL_FS"/>
    <property type="match status" value="1"/>
</dbReference>
<dbReference type="Gene3D" id="3.30.60.30">
    <property type="match status" value="1"/>
</dbReference>
<dbReference type="InterPro" id="IPR002350">
    <property type="entry name" value="Kazal_dom"/>
</dbReference>
<dbReference type="InterPro" id="IPR036058">
    <property type="entry name" value="Kazal_dom_sf"/>
</dbReference>
<dbReference type="InterPro" id="IPR053265">
    <property type="entry name" value="Serpin"/>
</dbReference>
<dbReference type="PANTHER" id="PTHR21131:SF0">
    <property type="entry name" value="GEO10195P1-RELATED"/>
    <property type="match status" value="1"/>
</dbReference>
<dbReference type="PANTHER" id="PTHR21131">
    <property type="entry name" value="SERINE-TYPE ENDOPEPTIDASE INHIBITOR"/>
    <property type="match status" value="1"/>
</dbReference>
<dbReference type="Pfam" id="PF00050">
    <property type="entry name" value="Kazal_1"/>
    <property type="match status" value="1"/>
</dbReference>
<dbReference type="SMART" id="SM00280">
    <property type="entry name" value="KAZAL"/>
    <property type="match status" value="1"/>
</dbReference>
<dbReference type="SUPFAM" id="SSF100895">
    <property type="entry name" value="Kazal-type serine protease inhibitors"/>
    <property type="match status" value="1"/>
</dbReference>
<dbReference type="PROSITE" id="PS00282">
    <property type="entry name" value="KAZAL_1"/>
    <property type="match status" value="1"/>
</dbReference>
<dbReference type="PROSITE" id="PS51465">
    <property type="entry name" value="KAZAL_2"/>
    <property type="match status" value="1"/>
</dbReference>
<comment type="function">
    <text evidence="5 6 8 9">Anticoagulant protein that decreases host thrombin (F2) activity via an uncompetitive inhibition mechanism (PubMed:20363282, PubMed:21167902). Inhibits amidolytic activity of host plasmin (PLG) (PubMed:20363282, PubMed:31726374, PubMed:34800067). Inhibits amidolytic activity of host trypsin (PubMed:20363282). Inhibits trypsin-like endogenous activity from gut of female mosquitoes 24 hours after feeding and weakly affects enzyme activity from gut 3 hours after feeding, suggesting a possible role as an inhibitor of endogenous proteases (PubMed:20363282).</text>
</comment>
<comment type="function">
    <text evidence="8">(Microbial infection) Limits host plasmin-mediated enhancement of dengue virus type 2 infection in mosquito midgut.</text>
</comment>
<comment type="subunit">
    <text evidence="8 9">Interacts with human PLG (plasmin).</text>
</comment>
<comment type="subcellular location">
    <subcellularLocation>
        <location evidence="14">Secreted</location>
    </subcellularLocation>
</comment>
<comment type="tissue specificity">
    <text evidence="4 5 8">Female salivary gland (PubMed:17204158, PubMed:20363282). Female gut at 3 and 24 hours after blood feeding (PubMed:20363282, PubMed:31726374). Female carcass (PubMed:17204158). Male tissues (PubMed:17204158). Not detected in ovary and fat body at 3 and 24 hours after blood feeding (PubMed:20363282).</text>
</comment>
<comment type="developmental stage">
    <text evidence="5">Expressed in larvae, pupae and adult mosquitoes.</text>
</comment>
<comment type="induction">
    <text evidence="8">Expression in midgut is not affected by blood feeding.</text>
</comment>
<comment type="induction">
    <text evidence="8">(Microbial infection) Expression in midgut is not affected by infection with dengue virus type 2.</text>
</comment>
<comment type="disruption phenotype">
    <text evidence="8">(Microbial infection) RNAi-mediated knockdown results in increased dengue virus type 2 infection rates and increased number of infection foci per infected midgut following infectious blood meal.</text>
</comment>
<comment type="miscellaneous">
    <text evidence="5 6">Does not affect activity of host plasma kallikrein (KLKB1), coagulation factor XIIa (F12), factor Xa (F10), tissue plasminogen activator (PLAT), urokinase (PLAU), chymotrypsin and neutrophil elastase (ELANE) (PubMed:20363282). Does not affect thrombin-induced platelet aggregation (PubMed:21167902).</text>
</comment>
<organism evidence="17">
    <name type="scientific">Aedes aegypti</name>
    <name type="common">Yellowfever mosquito</name>
    <name type="synonym">Culex aegypti</name>
    <dbReference type="NCBI Taxonomy" id="7159"/>
    <lineage>
        <taxon>Eukaryota</taxon>
        <taxon>Metazoa</taxon>
        <taxon>Ecdysozoa</taxon>
        <taxon>Arthropoda</taxon>
        <taxon>Hexapoda</taxon>
        <taxon>Insecta</taxon>
        <taxon>Pterygota</taxon>
        <taxon>Neoptera</taxon>
        <taxon>Endopterygota</taxon>
        <taxon>Diptera</taxon>
        <taxon>Nematocera</taxon>
        <taxon>Culicoidea</taxon>
        <taxon>Culicidae</taxon>
        <taxon>Culicinae</taxon>
        <taxon>Aedini</taxon>
        <taxon>Aedes</taxon>
        <taxon>Stegomyia</taxon>
    </lineage>
</organism>
<name>AATI_AEDAE</name>
<sequence>MRHIGVFVGVLALALVLLVVEARSDAERGVCACPRIYMPVCGSNLKTYNNDCLLRCEINSDLGRANNLRKIADQACDNLTDNVNDFIPQEY</sequence>
<feature type="signal peptide" evidence="1">
    <location>
        <begin position="1"/>
        <end position="22"/>
    </location>
</feature>
<feature type="chain" id="PRO_0000461606" description="Kazal-type trypsin inhibitor" evidence="1">
    <location>
        <begin position="23"/>
        <end position="91"/>
    </location>
</feature>
<feature type="domain" description="Kazal-like" evidence="3">
    <location>
        <begin position="25"/>
        <end position="78"/>
    </location>
</feature>
<feature type="site" description="Reactive bond" evidence="3">
    <location>
        <begin position="35"/>
        <end position="36"/>
    </location>
</feature>
<feature type="glycosylation site" description="N-linked (GlcNAc...) asparagine" evidence="2">
    <location>
        <position position="78"/>
    </location>
</feature>
<feature type="disulfide bond" evidence="7 9 18 19">
    <location>
        <begin position="31"/>
        <end position="56"/>
    </location>
</feature>
<feature type="disulfide bond" evidence="7 9 18 19">
    <location>
        <begin position="33"/>
        <end position="52"/>
    </location>
</feature>
<feature type="disulfide bond" evidence="7 9 18 19">
    <location>
        <begin position="41"/>
        <end position="76"/>
    </location>
</feature>
<feature type="mutagenesis site" description="Results in unstable mutant which precipitates out of solution." evidence="9">
    <original>P</original>
    <variation>F</variation>
    <location>
        <position position="34"/>
    </location>
</feature>
<feature type="mutagenesis site" description="Abolishes inhibitory activity towards human plasmin. Abolishes suppression of host plasmin-mediated increase of dengue virus type 2 infection in mosquito midgut." evidence="8">
    <original>R</original>
    <variation>A</variation>
    <location>
        <position position="35"/>
    </location>
</feature>
<feature type="turn" evidence="21">
    <location>
        <begin position="25"/>
        <end position="29"/>
    </location>
</feature>
<feature type="strand" evidence="21">
    <location>
        <begin position="32"/>
        <end position="34"/>
    </location>
</feature>
<feature type="strand" evidence="20">
    <location>
        <begin position="40"/>
        <end position="42"/>
    </location>
</feature>
<feature type="strand" evidence="20">
    <location>
        <begin position="47"/>
        <end position="50"/>
    </location>
</feature>
<feature type="helix" evidence="20">
    <location>
        <begin position="51"/>
        <end position="58"/>
    </location>
</feature>
<feature type="helix" evidence="20">
    <location>
        <begin position="61"/>
        <end position="64"/>
    </location>
</feature>
<feature type="turn" evidence="20">
    <location>
        <begin position="65"/>
        <end position="67"/>
    </location>
</feature>
<feature type="strand" evidence="20">
    <location>
        <begin position="70"/>
        <end position="74"/>
    </location>
</feature>
<feature type="helix" evidence="20">
    <location>
        <begin position="76"/>
        <end position="78"/>
    </location>
</feature>
<protein>
    <recommendedName>
        <fullName evidence="14">Kazal-type trypsin inhibitor</fullName>
        <shortName evidence="10 11 12 13">AaTI</shortName>
    </recommendedName>
    <alternativeName>
        <fullName evidence="14">Kazal-type thrombin inhibitor</fullName>
    </alternativeName>
</protein>
<accession>Q177W0</accession>
<accession>Q1HRB8</accession>
<evidence type="ECO:0000255" key="1"/>
<evidence type="ECO:0000255" key="2">
    <source>
        <dbReference type="PROSITE-ProRule" id="PRU00498"/>
    </source>
</evidence>
<evidence type="ECO:0000255" key="3">
    <source>
        <dbReference type="PROSITE-ProRule" id="PRU00798"/>
    </source>
</evidence>
<evidence type="ECO:0000269" key="4">
    <source>
    </source>
</evidence>
<evidence type="ECO:0000269" key="5">
    <source>
    </source>
</evidence>
<evidence type="ECO:0000269" key="6">
    <source>
    </source>
</evidence>
<evidence type="ECO:0000269" key="7">
    <source>
    </source>
</evidence>
<evidence type="ECO:0000269" key="8">
    <source>
    </source>
</evidence>
<evidence type="ECO:0000269" key="9">
    <source>
    </source>
</evidence>
<evidence type="ECO:0000303" key="10">
    <source>
    </source>
</evidence>
<evidence type="ECO:0000303" key="11">
    <source>
    </source>
</evidence>
<evidence type="ECO:0000303" key="12">
    <source>
    </source>
</evidence>
<evidence type="ECO:0000303" key="13">
    <source>
    </source>
</evidence>
<evidence type="ECO:0000305" key="14"/>
<evidence type="ECO:0000312" key="15">
    <source>
        <dbReference type="EMBL" id="ABF18209.1"/>
    </source>
</evidence>
<evidence type="ECO:0000312" key="16">
    <source>
        <dbReference type="EMBL" id="EAT42466.1"/>
    </source>
</evidence>
<evidence type="ECO:0000312" key="17">
    <source>
        <dbReference type="Proteomes" id="UP000682892"/>
    </source>
</evidence>
<evidence type="ECO:0007744" key="18">
    <source>
        <dbReference type="PDB" id="5DAE"/>
    </source>
</evidence>
<evidence type="ECO:0007744" key="19">
    <source>
        <dbReference type="PDB" id="7E50"/>
    </source>
</evidence>
<evidence type="ECO:0007829" key="20">
    <source>
        <dbReference type="PDB" id="5DAE"/>
    </source>
</evidence>
<evidence type="ECO:0007829" key="21">
    <source>
        <dbReference type="PDB" id="7E50"/>
    </source>
</evidence>
<proteinExistence type="evidence at protein level"/>